<gene>
    <name evidence="1" type="primary">leuS</name>
    <name type="ordered locus">CYB_2881</name>
</gene>
<reference key="1">
    <citation type="journal article" date="2007" name="ISME J.">
        <title>Population level functional diversity in a microbial community revealed by comparative genomic and metagenomic analyses.</title>
        <authorList>
            <person name="Bhaya D."/>
            <person name="Grossman A.R."/>
            <person name="Steunou A.-S."/>
            <person name="Khuri N."/>
            <person name="Cohan F.M."/>
            <person name="Hamamura N."/>
            <person name="Melendrez M.C."/>
            <person name="Bateson M.M."/>
            <person name="Ward D.M."/>
            <person name="Heidelberg J.F."/>
        </authorList>
    </citation>
    <scope>NUCLEOTIDE SEQUENCE [LARGE SCALE GENOMIC DNA]</scope>
    <source>
        <strain>JA-2-3B'a(2-13)</strain>
    </source>
</reference>
<organism>
    <name type="scientific">Synechococcus sp. (strain JA-2-3B'a(2-13))</name>
    <name type="common">Cyanobacteria bacterium Yellowstone B-Prime</name>
    <dbReference type="NCBI Taxonomy" id="321332"/>
    <lineage>
        <taxon>Bacteria</taxon>
        <taxon>Bacillati</taxon>
        <taxon>Cyanobacteriota</taxon>
        <taxon>Cyanophyceae</taxon>
        <taxon>Synechococcales</taxon>
        <taxon>Synechococcaceae</taxon>
        <taxon>Synechococcus</taxon>
    </lineage>
</organism>
<dbReference type="EC" id="6.1.1.4" evidence="1"/>
<dbReference type="EMBL" id="CP000240">
    <property type="protein sequence ID" value="ABD03801.1"/>
    <property type="molecule type" value="Genomic_DNA"/>
</dbReference>
<dbReference type="SMR" id="Q2JHX0"/>
<dbReference type="STRING" id="321332.CYB_2881"/>
<dbReference type="KEGG" id="cyb:CYB_2881"/>
<dbReference type="eggNOG" id="COG0495">
    <property type="taxonomic scope" value="Bacteria"/>
</dbReference>
<dbReference type="HOGENOM" id="CLU_004427_0_0_3"/>
<dbReference type="Proteomes" id="UP000001938">
    <property type="component" value="Chromosome"/>
</dbReference>
<dbReference type="GO" id="GO:0005829">
    <property type="term" value="C:cytosol"/>
    <property type="evidence" value="ECO:0007669"/>
    <property type="project" value="TreeGrafter"/>
</dbReference>
<dbReference type="GO" id="GO:0002161">
    <property type="term" value="F:aminoacyl-tRNA deacylase activity"/>
    <property type="evidence" value="ECO:0007669"/>
    <property type="project" value="InterPro"/>
</dbReference>
<dbReference type="GO" id="GO:0005524">
    <property type="term" value="F:ATP binding"/>
    <property type="evidence" value="ECO:0007669"/>
    <property type="project" value="UniProtKB-UniRule"/>
</dbReference>
<dbReference type="GO" id="GO:0004823">
    <property type="term" value="F:leucine-tRNA ligase activity"/>
    <property type="evidence" value="ECO:0007669"/>
    <property type="project" value="UniProtKB-UniRule"/>
</dbReference>
<dbReference type="GO" id="GO:0006429">
    <property type="term" value="P:leucyl-tRNA aminoacylation"/>
    <property type="evidence" value="ECO:0007669"/>
    <property type="project" value="UniProtKB-UniRule"/>
</dbReference>
<dbReference type="CDD" id="cd07958">
    <property type="entry name" value="Anticodon_Ia_Leu_BEm"/>
    <property type="match status" value="1"/>
</dbReference>
<dbReference type="CDD" id="cd00812">
    <property type="entry name" value="LeuRS_core"/>
    <property type="match status" value="1"/>
</dbReference>
<dbReference type="FunFam" id="3.40.50.620:FF:000003">
    <property type="entry name" value="Leucine--tRNA ligase"/>
    <property type="match status" value="1"/>
</dbReference>
<dbReference type="FunFam" id="3.90.740.10:FF:000017">
    <property type="entry name" value="Leucine--tRNA ligase"/>
    <property type="match status" value="1"/>
</dbReference>
<dbReference type="FunFam" id="1.10.730.10:FF:000011">
    <property type="entry name" value="Leucine--tRNA ligase chloroplastic/mitochondrial"/>
    <property type="match status" value="1"/>
</dbReference>
<dbReference type="FunFam" id="3.40.50.620:FF:000100">
    <property type="entry name" value="probable leucine--tRNA ligase, mitochondrial"/>
    <property type="match status" value="1"/>
</dbReference>
<dbReference type="Gene3D" id="2.20.28.290">
    <property type="match status" value="1"/>
</dbReference>
<dbReference type="Gene3D" id="3.10.20.590">
    <property type="match status" value="1"/>
</dbReference>
<dbReference type="Gene3D" id="3.40.50.620">
    <property type="entry name" value="HUPs"/>
    <property type="match status" value="2"/>
</dbReference>
<dbReference type="Gene3D" id="1.10.730.10">
    <property type="entry name" value="Isoleucyl-tRNA Synthetase, Domain 1"/>
    <property type="match status" value="1"/>
</dbReference>
<dbReference type="Gene3D" id="3.90.740.10">
    <property type="entry name" value="Valyl/Leucyl/Isoleucyl-tRNA synthetase, editing domain"/>
    <property type="match status" value="1"/>
</dbReference>
<dbReference type="HAMAP" id="MF_00049_B">
    <property type="entry name" value="Leu_tRNA_synth_B"/>
    <property type="match status" value="1"/>
</dbReference>
<dbReference type="InterPro" id="IPR001412">
    <property type="entry name" value="aa-tRNA-synth_I_CS"/>
</dbReference>
<dbReference type="InterPro" id="IPR002300">
    <property type="entry name" value="aa-tRNA-synth_Ia"/>
</dbReference>
<dbReference type="InterPro" id="IPR002302">
    <property type="entry name" value="Leu-tRNA-ligase"/>
</dbReference>
<dbReference type="InterPro" id="IPR025709">
    <property type="entry name" value="Leu_tRNA-synth_edit"/>
</dbReference>
<dbReference type="InterPro" id="IPR013155">
    <property type="entry name" value="M/V/L/I-tRNA-synth_anticd-bd"/>
</dbReference>
<dbReference type="InterPro" id="IPR015413">
    <property type="entry name" value="Methionyl/Leucyl_tRNA_Synth"/>
</dbReference>
<dbReference type="InterPro" id="IPR014729">
    <property type="entry name" value="Rossmann-like_a/b/a_fold"/>
</dbReference>
<dbReference type="InterPro" id="IPR009080">
    <property type="entry name" value="tRNAsynth_Ia_anticodon-bd"/>
</dbReference>
<dbReference type="InterPro" id="IPR009008">
    <property type="entry name" value="Val/Leu/Ile-tRNA-synth_edit"/>
</dbReference>
<dbReference type="NCBIfam" id="TIGR00396">
    <property type="entry name" value="leuS_bact"/>
    <property type="match status" value="1"/>
</dbReference>
<dbReference type="PANTHER" id="PTHR43740:SF2">
    <property type="entry name" value="LEUCINE--TRNA LIGASE, MITOCHONDRIAL"/>
    <property type="match status" value="1"/>
</dbReference>
<dbReference type="PANTHER" id="PTHR43740">
    <property type="entry name" value="LEUCYL-TRNA SYNTHETASE"/>
    <property type="match status" value="1"/>
</dbReference>
<dbReference type="Pfam" id="PF08264">
    <property type="entry name" value="Anticodon_1"/>
    <property type="match status" value="1"/>
</dbReference>
<dbReference type="Pfam" id="PF00133">
    <property type="entry name" value="tRNA-synt_1"/>
    <property type="match status" value="1"/>
</dbReference>
<dbReference type="Pfam" id="PF13603">
    <property type="entry name" value="tRNA-synt_1_2"/>
    <property type="match status" value="1"/>
</dbReference>
<dbReference type="Pfam" id="PF09334">
    <property type="entry name" value="tRNA-synt_1g"/>
    <property type="match status" value="1"/>
</dbReference>
<dbReference type="PRINTS" id="PR00985">
    <property type="entry name" value="TRNASYNTHLEU"/>
</dbReference>
<dbReference type="SUPFAM" id="SSF47323">
    <property type="entry name" value="Anticodon-binding domain of a subclass of class I aminoacyl-tRNA synthetases"/>
    <property type="match status" value="1"/>
</dbReference>
<dbReference type="SUPFAM" id="SSF52374">
    <property type="entry name" value="Nucleotidylyl transferase"/>
    <property type="match status" value="1"/>
</dbReference>
<dbReference type="SUPFAM" id="SSF50677">
    <property type="entry name" value="ValRS/IleRS/LeuRS editing domain"/>
    <property type="match status" value="1"/>
</dbReference>
<dbReference type="PROSITE" id="PS00178">
    <property type="entry name" value="AA_TRNA_LIGASE_I"/>
    <property type="match status" value="1"/>
</dbReference>
<keyword id="KW-0030">Aminoacyl-tRNA synthetase</keyword>
<keyword id="KW-0067">ATP-binding</keyword>
<keyword id="KW-0963">Cytoplasm</keyword>
<keyword id="KW-0436">Ligase</keyword>
<keyword id="KW-0547">Nucleotide-binding</keyword>
<keyword id="KW-0648">Protein biosynthesis</keyword>
<keyword id="KW-1185">Reference proteome</keyword>
<protein>
    <recommendedName>
        <fullName evidence="1">Leucine--tRNA ligase</fullName>
        <ecNumber evidence="1">6.1.1.4</ecNumber>
    </recommendedName>
    <alternativeName>
        <fullName evidence="1">Leucyl-tRNA synthetase</fullName>
        <shortName evidence="1">LeuRS</shortName>
    </alternativeName>
</protein>
<sequence length="882" mass="99521">MDARYNPQAIESKWQAHWREIGLDRTPELKDGSRKFYALSMFPYPSGNLHMGHVRNYTITDVIARHKRMQGYAVLHPMGWDAFGLPAENAAIDRGIPPAKWTYQNIAQMREQLQRLGLSYDWEREITTCAPDYYKWTQWLFLQFFKAGLAYQKEAPVNWDPVDQTVLANEQVDAEGRSWRSGALVEKRMLKQWFFKITAYADQLLADLEKLSGWPERVRTMQENWIGQSVGAKVIFKTEAGDELAVFTTRPDTLWGATFMVMSPEHPLVDKLTTAEQLQAVRAYQAQAAARSEIERSAEDREKTGVWTGSYAINPVNQERIPIWIADYVLMGYGTGAIMAVPAHDQRDFEFARKFGLPIKRVVQPPEGSLSSTDRASGTESSELQAAWTGEGVMINSGPLDGIPVGKGPGQSVERAIAWLEAQGLGEKQINYRLRDWLISRQRYWGCPIPVIHCPHCGIVPVPEKDLPVLLPEDVELTGRGGSPLAQLEDWVKVKCPTCGAEARRETDTMDTFICSSWYFLRFSDARNDREIFRKDRVNAWLPVDQYVGGIEHAILHLLYSRFFTKVLRDRGLLDFDEPFLRLLTQGMVQGRTYYNPNKSGKDRWIPAALVKDPDNPTDPETGEPLEVIYATMSKSKGNGVDPEEVLAHYGADTARMFILFKAPPEKDLEWDDADVEGQFRFLNRVWRQVYEFVVRGGGTESWRGRVSELLPAKVEVGSLTKAEKDLRRAIHTAIKEVSEDLENDYQFNTAIAELMKLSNALGEAGIPDSPVYAEGIRTLVLLMAPFAPHIAEELWQALGGADSVHRQSWPSYDPAALVADTVTIVIQVNGKLRGSFEAPAEVTPEEQEQLALRSEAAQKYLEGATPKKVVVVPKKLVNFVL</sequence>
<comment type="catalytic activity">
    <reaction evidence="1">
        <text>tRNA(Leu) + L-leucine + ATP = L-leucyl-tRNA(Leu) + AMP + diphosphate</text>
        <dbReference type="Rhea" id="RHEA:11688"/>
        <dbReference type="Rhea" id="RHEA-COMP:9613"/>
        <dbReference type="Rhea" id="RHEA-COMP:9622"/>
        <dbReference type="ChEBI" id="CHEBI:30616"/>
        <dbReference type="ChEBI" id="CHEBI:33019"/>
        <dbReference type="ChEBI" id="CHEBI:57427"/>
        <dbReference type="ChEBI" id="CHEBI:78442"/>
        <dbReference type="ChEBI" id="CHEBI:78494"/>
        <dbReference type="ChEBI" id="CHEBI:456215"/>
        <dbReference type="EC" id="6.1.1.4"/>
    </reaction>
</comment>
<comment type="subcellular location">
    <subcellularLocation>
        <location evidence="1">Cytoplasm</location>
    </subcellularLocation>
</comment>
<comment type="similarity">
    <text evidence="1">Belongs to the class-I aminoacyl-tRNA synthetase family.</text>
</comment>
<accession>Q2JHX0</accession>
<proteinExistence type="inferred from homology"/>
<evidence type="ECO:0000255" key="1">
    <source>
        <dbReference type="HAMAP-Rule" id="MF_00049"/>
    </source>
</evidence>
<feature type="chain" id="PRO_1000009456" description="Leucine--tRNA ligase">
    <location>
        <begin position="1"/>
        <end position="882"/>
    </location>
</feature>
<feature type="short sequence motif" description="'HIGH' region">
    <location>
        <begin position="43"/>
        <end position="53"/>
    </location>
</feature>
<feature type="short sequence motif" description="'KMSKS' region">
    <location>
        <begin position="632"/>
        <end position="636"/>
    </location>
</feature>
<feature type="binding site" evidence="1">
    <location>
        <position position="635"/>
    </location>
    <ligand>
        <name>ATP</name>
        <dbReference type="ChEBI" id="CHEBI:30616"/>
    </ligand>
</feature>
<name>SYL_SYNJB</name>